<evidence type="ECO:0000255" key="1"/>
<evidence type="ECO:0000269" key="2">
    <source>
    </source>
</evidence>
<evidence type="ECO:0000303" key="3">
    <source>
    </source>
</evidence>
<evidence type="ECO:0000305" key="4"/>
<evidence type="ECO:0000305" key="5">
    <source>
    </source>
</evidence>
<evidence type="ECO:0000312" key="6">
    <source>
        <dbReference type="EMBL" id="CAL97715.1"/>
    </source>
</evidence>
<name>NUPC_LACLM</name>
<gene>
    <name evidence="3" type="primary">nupC</name>
    <name evidence="6" type="ordered locus">llmg_1121</name>
</gene>
<feature type="chain" id="PRO_0000449275" description="Nucleoside ABC transporter permease protein NupC">
    <location>
        <begin position="1"/>
        <end position="317"/>
    </location>
</feature>
<feature type="transmembrane region" description="Helical" evidence="1">
    <location>
        <begin position="9"/>
        <end position="29"/>
    </location>
</feature>
<feature type="transmembrane region" description="Helical" evidence="1">
    <location>
        <begin position="35"/>
        <end position="55"/>
    </location>
</feature>
<feature type="transmembrane region" description="Helical" evidence="1">
    <location>
        <begin position="62"/>
        <end position="82"/>
    </location>
</feature>
<feature type="transmembrane region" description="Helical" evidence="1">
    <location>
        <begin position="98"/>
        <end position="118"/>
    </location>
</feature>
<feature type="transmembrane region" description="Helical" evidence="1">
    <location>
        <begin position="132"/>
        <end position="151"/>
    </location>
</feature>
<feature type="transmembrane region" description="Helical" evidence="1">
    <location>
        <begin position="155"/>
        <end position="172"/>
    </location>
</feature>
<feature type="transmembrane region" description="Helical" evidence="1">
    <location>
        <begin position="203"/>
        <end position="223"/>
    </location>
</feature>
<feature type="transmembrane region" description="Helical" evidence="1">
    <location>
        <begin position="225"/>
        <end position="245"/>
    </location>
</feature>
<feature type="transmembrane region" description="Helical" evidence="1">
    <location>
        <begin position="251"/>
        <end position="271"/>
    </location>
</feature>
<feature type="transmembrane region" description="Helical" evidence="1">
    <location>
        <begin position="286"/>
        <end position="306"/>
    </location>
</feature>
<comment type="function">
    <text evidence="2 4">Part of an ABC transporter complex involved in the uptake of all common nucleosides (PubMed:20595258). Responsible for the translocation of the substrate across the membrane (Probable).</text>
</comment>
<comment type="subunit">
    <text evidence="5">The complex is composed of two ATP-binding proteins (NupA), two transmembrane proteins (NupB and NupC) and a solute-binding protein (BmpA).</text>
</comment>
<comment type="subcellular location">
    <subcellularLocation>
        <location evidence="4">Cell membrane</location>
        <topology evidence="1">Multi-pass membrane protein</topology>
    </subcellularLocation>
</comment>
<comment type="induction">
    <text evidence="2">Constitutively expressed.</text>
</comment>
<comment type="similarity">
    <text evidence="4">Belongs to the binding-protein-dependent transport system permease family.</text>
</comment>
<organism>
    <name type="scientific">Lactococcus lactis subsp. cremoris (strain MG1363)</name>
    <dbReference type="NCBI Taxonomy" id="416870"/>
    <lineage>
        <taxon>Bacteria</taxon>
        <taxon>Bacillati</taxon>
        <taxon>Bacillota</taxon>
        <taxon>Bacilli</taxon>
        <taxon>Lactobacillales</taxon>
        <taxon>Streptococcaceae</taxon>
        <taxon>Lactococcus</taxon>
        <taxon>Lactococcus cremoris subsp. cremoris</taxon>
    </lineage>
</organism>
<protein>
    <recommendedName>
        <fullName evidence="4">Nucleoside ABC transporter permease protein NupC</fullName>
    </recommendedName>
</protein>
<keyword id="KW-1003">Cell membrane</keyword>
<keyword id="KW-0472">Membrane</keyword>
<keyword id="KW-0812">Transmembrane</keyword>
<keyword id="KW-1133">Transmembrane helix</keyword>
<keyword id="KW-0813">Transport</keyword>
<proteinExistence type="evidence at protein level"/>
<accession>A2RKA5</accession>
<dbReference type="EMBL" id="AM406671">
    <property type="protein sequence ID" value="CAL97715.1"/>
    <property type="molecule type" value="Genomic_DNA"/>
</dbReference>
<dbReference type="RefSeq" id="WP_011676327.1">
    <property type="nucleotide sequence ID" value="NC_009004.1"/>
</dbReference>
<dbReference type="STRING" id="416870.llmg_1121"/>
<dbReference type="TCDB" id="3.A.1.2.17">
    <property type="family name" value="the atp-binding cassette (abc) superfamily"/>
</dbReference>
<dbReference type="GeneID" id="61109608"/>
<dbReference type="KEGG" id="llm:llmg_1121"/>
<dbReference type="eggNOG" id="COG1079">
    <property type="taxonomic scope" value="Bacteria"/>
</dbReference>
<dbReference type="HOGENOM" id="CLU_040769_1_2_9"/>
<dbReference type="OrthoDB" id="9792579at2"/>
<dbReference type="PhylomeDB" id="A2RKA5"/>
<dbReference type="Proteomes" id="UP000000364">
    <property type="component" value="Chromosome"/>
</dbReference>
<dbReference type="GO" id="GO:0005886">
    <property type="term" value="C:plasma membrane"/>
    <property type="evidence" value="ECO:0007669"/>
    <property type="project" value="UniProtKB-SubCell"/>
</dbReference>
<dbReference type="GO" id="GO:0022857">
    <property type="term" value="F:transmembrane transporter activity"/>
    <property type="evidence" value="ECO:0007669"/>
    <property type="project" value="InterPro"/>
</dbReference>
<dbReference type="CDD" id="cd06580">
    <property type="entry name" value="TM_PBP1_transp_TpRbsC_like"/>
    <property type="match status" value="1"/>
</dbReference>
<dbReference type="InterPro" id="IPR001851">
    <property type="entry name" value="ABC_transp_permease"/>
</dbReference>
<dbReference type="PANTHER" id="PTHR43370:SF1">
    <property type="entry name" value="GUANOSINE ABC TRANSPORTER PERMEASE PROTEIN NUPQ"/>
    <property type="match status" value="1"/>
</dbReference>
<dbReference type="PANTHER" id="PTHR43370">
    <property type="entry name" value="SUGAR ABC TRANSPORTER INTEGRAL MEMBRANE PROTEIN-RELATED"/>
    <property type="match status" value="1"/>
</dbReference>
<dbReference type="Pfam" id="PF02653">
    <property type="entry name" value="BPD_transp_2"/>
    <property type="match status" value="1"/>
</dbReference>
<sequence length="317" mass="33552">MNVVNTLQIIVANMLIYSTPLIFTSIGGVFSERGGIVNVGLEGIMTIGAFSSVVFNLTTAGMFGSMTPWLSILFGALIGALFSSLHAVATVNLRADHIVSGTVLNLMAPALGVFLLQVFYQQGQININEQIGYWNVPLLSNIPVIGKIFFTQTSLPGFLAIVVAILAWYVLFKTRFGLRLRSVGENPQAADTLGINVYAYRWAGVLLSGVLGGVGGAIYAQAISGNFSVSTIAGQGFISLAAMIFGKWNPIGAMLSSLLFGLFTSLAVVGGQIPGIKEIPSSFLQMAPYVFTIIVLALFLGKAIAPKADGVNYIKSK</sequence>
<reference key="1">
    <citation type="journal article" date="2007" name="J. Bacteriol.">
        <title>The complete genome sequence of the lactic acid bacterial paradigm Lactococcus lactis subsp. cremoris MG1363.</title>
        <authorList>
            <person name="Wegmann U."/>
            <person name="O'Connell-Motherway M."/>
            <person name="Zomer A."/>
            <person name="Buist G."/>
            <person name="Shearman C."/>
            <person name="Canchaya C."/>
            <person name="Ventura M."/>
            <person name="Goesmann A."/>
            <person name="Gasson M.J."/>
            <person name="Kuipers O.P."/>
            <person name="van Sinderen D."/>
            <person name="Kok J."/>
        </authorList>
    </citation>
    <scope>NUCLEOTIDE SEQUENCE [LARGE SCALE GENOMIC DNA]</scope>
    <source>
        <strain>MG1363</strain>
    </source>
</reference>
<reference key="2">
    <citation type="journal article" date="2010" name="Microbiology">
        <title>Two nucleoside transporters in Lactococcus lactis with different substrate specificities.</title>
        <authorList>
            <person name="Martinussen J."/>
            <person name="Soerensen C."/>
            <person name="Jendresen C.B."/>
            <person name="Kilstrup M."/>
        </authorList>
    </citation>
    <scope>FUNCTION</scope>
    <scope>SUBUNIT</scope>
    <scope>INDUCTION</scope>
    <source>
        <strain>MG1363</strain>
    </source>
</reference>